<keyword id="KW-0256">Endoplasmic reticulum</keyword>
<keyword id="KW-0472">Membrane</keyword>
<keyword id="KW-0489">Methyltransferase</keyword>
<keyword id="KW-1185">Reference proteome</keyword>
<keyword id="KW-0949">S-adenosyl-L-methionine</keyword>
<keyword id="KW-0808">Transferase</keyword>
<keyword id="KW-0812">Transmembrane</keyword>
<keyword id="KW-1133">Transmembrane helix</keyword>
<feature type="chain" id="PRO_0000209895" description="Protein-S-isoprenylcysteine O-methyltransferase">
    <location>
        <begin position="1"/>
        <end position="283"/>
    </location>
</feature>
<feature type="topological domain" description="Cytoplasmic" evidence="3">
    <location>
        <begin position="1"/>
        <end position="15"/>
    </location>
</feature>
<feature type="transmembrane region" description="Helical" evidence="3">
    <location>
        <begin position="16"/>
        <end position="32"/>
    </location>
</feature>
<feature type="topological domain" description="Lumenal" evidence="3">
    <location>
        <begin position="33"/>
        <end position="40"/>
    </location>
</feature>
<feature type="transmembrane region" description="Helical" evidence="3">
    <location>
        <begin position="41"/>
        <end position="58"/>
    </location>
</feature>
<feature type="topological domain" description="Cytoplasmic" evidence="3">
    <location>
        <begin position="59"/>
        <end position="68"/>
    </location>
</feature>
<feature type="transmembrane region" description="Helical" evidence="3">
    <location>
        <begin position="69"/>
        <end position="86"/>
    </location>
</feature>
<feature type="topological domain" description="Lumenal" evidence="3">
    <location>
        <begin position="87"/>
        <end position="91"/>
    </location>
</feature>
<feature type="transmembrane region" description="Helical" evidence="3">
    <location>
        <begin position="92"/>
        <end position="111"/>
    </location>
</feature>
<feature type="topological domain" description="Cytoplasmic" evidence="3">
    <location>
        <begin position="112"/>
        <end position="130"/>
    </location>
</feature>
<feature type="transmembrane region" description="Helical" evidence="3">
    <location>
        <begin position="131"/>
        <end position="148"/>
    </location>
</feature>
<feature type="topological domain" description="Lumenal" evidence="3">
    <location>
        <begin position="149"/>
        <end position="153"/>
    </location>
</feature>
<feature type="transmembrane region" description="Helical" evidence="3">
    <location>
        <begin position="154"/>
        <end position="173"/>
    </location>
</feature>
<feature type="topological domain" description="Cytoplasmic" evidence="3">
    <location>
        <begin position="174"/>
        <end position="211"/>
    </location>
</feature>
<feature type="transmembrane region" description="Helical" evidence="3">
    <location>
        <begin position="212"/>
        <end position="227"/>
    </location>
</feature>
<feature type="topological domain" description="Lumenal" evidence="3">
    <location>
        <position position="228"/>
    </location>
</feature>
<feature type="transmembrane region" description="Helical" evidence="3">
    <location>
        <begin position="229"/>
        <end position="243"/>
    </location>
</feature>
<feature type="topological domain" description="Cytoplasmic" evidence="3">
    <location>
        <begin position="244"/>
        <end position="283"/>
    </location>
</feature>
<feature type="binding site" evidence="1">
    <location>
        <position position="189"/>
    </location>
    <ligand>
        <name>S-adenosyl-L-methionine</name>
        <dbReference type="ChEBI" id="CHEBI:59789"/>
    </ligand>
</feature>
<feature type="binding site" evidence="1">
    <location>
        <begin position="196"/>
        <end position="199"/>
    </location>
    <ligand>
        <name>S-adenosyl-L-methionine</name>
        <dbReference type="ChEBI" id="CHEBI:59789"/>
    </ligand>
</feature>
<feature type="binding site" evidence="1">
    <location>
        <position position="204"/>
    </location>
    <ligand>
        <name>S-adenosyl-L-methionine</name>
        <dbReference type="ChEBI" id="CHEBI:59789"/>
    </ligand>
</feature>
<feature type="binding site" evidence="1">
    <location>
        <begin position="209"/>
        <end position="212"/>
    </location>
    <ligand>
        <name>S-adenosyl-L-methionine</name>
        <dbReference type="ChEBI" id="CHEBI:59789"/>
    </ligand>
</feature>
<feature type="binding site" evidence="1">
    <location>
        <position position="246"/>
    </location>
    <ligand>
        <name>substrate</name>
    </ligand>
</feature>
<feature type="binding site" evidence="1">
    <location>
        <position position="250"/>
    </location>
    <ligand>
        <name>S-adenosyl-L-methionine</name>
        <dbReference type="ChEBI" id="CHEBI:59789"/>
    </ligand>
</feature>
<feature type="sequence conflict" description="In Ref. 2; AA022288." evidence="7" ref="2">
    <original>A</original>
    <variation>D</variation>
    <location>
        <position position="24"/>
    </location>
</feature>
<feature type="sequence conflict" description="In Ref. 2." evidence="7" ref="2">
    <original>G</original>
    <variation>A</variation>
    <location>
        <position position="42"/>
    </location>
</feature>
<name>ICMT_MOUSE</name>
<reference key="1">
    <citation type="journal article" date="2000" name="Nat. Neurosci.">
        <title>Polyglutamine expansion down-regulates specific neuronal genes before pathologic changes in SCA1.</title>
        <authorList>
            <person name="Lin X."/>
            <person name="Antalffy B."/>
            <person name="Kang D."/>
            <person name="Orr H.T."/>
            <person name="Zoghbi H.Y."/>
        </authorList>
    </citation>
    <scope>NUCLEOTIDE SEQUENCE [MRNA] OF 20-283</scope>
    <scope>TISSUE SPECIFICITY</scope>
    <scope>DEVELOPMENTAL STAGE</scope>
</reference>
<reference key="2">
    <citation type="submission" date="1996-11" db="EMBL/GenBank/DDBJ databases">
        <authorList>
            <person name="Marra M."/>
            <person name="Hillier L."/>
            <person name="Allen M."/>
            <person name="Bowles M."/>
            <person name="Dietrich N."/>
            <person name="Dubuque T."/>
            <person name="Geisel S."/>
            <person name="Kucaba T."/>
            <person name="Lacy M."/>
            <person name="Le M."/>
            <person name="Martin J."/>
            <person name="Morris M."/>
            <person name="Schellenberg K."/>
            <person name="Steptoe M."/>
            <person name="Tan F."/>
            <person name="Underwood K."/>
            <person name="Moore B."/>
            <person name="Theising B."/>
            <person name="Wylie T."/>
            <person name="Lennon G."/>
            <person name="Soares B."/>
            <person name="Wilson R."/>
            <person name="Waterston R."/>
        </authorList>
    </citation>
    <scope>NUCLEOTIDE SEQUENCE [MRNA] OF 1-153</scope>
    <source>
        <strain>C57BL/6J</strain>
        <tissue>Placenta</tissue>
    </source>
</reference>
<reference key="3">
    <citation type="journal article" date="2007" name="Proc. Natl. Acad. Sci. U.S.A.">
        <title>HIV protease inhibitors block the zinc metalloproteinase ZMPSTE24 and lead to an accumulation of prelamin A in cells.</title>
        <authorList>
            <person name="Coffinier C."/>
            <person name="Hudon S.E."/>
            <person name="Farber E.A."/>
            <person name="Chang S.Y."/>
            <person name="Hrycyna C.A."/>
            <person name="Young S.G."/>
            <person name="Fong L.G."/>
        </authorList>
    </citation>
    <scope>FUNCTION</scope>
</reference>
<gene>
    <name type="primary">Icmt</name>
</gene>
<protein>
    <recommendedName>
        <fullName>Protein-S-isoprenylcysteine O-methyltransferase</fullName>
        <ecNumber evidence="2">2.1.1.100</ecNumber>
    </recommendedName>
    <alternativeName>
        <fullName>Isoprenylcysteine carboxylmethyltransferase</fullName>
    </alternativeName>
    <alternativeName>
        <fullName>Prenylated protein carboxyl methyltransferase</fullName>
        <shortName>PPMT</shortName>
    </alternativeName>
    <alternativeName>
        <fullName>Prenylcysteine carboxyl methyltransferase</fullName>
        <shortName>pcCMT</shortName>
    </alternativeName>
</protein>
<accession>Q9EQK7</accession>
<sequence>MAAARRGSAGSEARLSLATFLLGASVLALPLLTRAGLQGRTGLALYVAGLNALLLLLYRPPRYQIAIRACFLGFVFGCGVLLSFSQSSWNHFGWYVCSLSLFHYSEYLVTAVNNPKSLSLDSFLLNHSLEYTVAALSSWIEFTLENIFWPELKQITWLSATGLLMVVFGECLRKAAMFTAGSNFNHVVQSEKSDTHTLVTSGVYAWCRHPSYVGWFYWSIGTQVMLCNPICGVVYALTVWRFFRDRTEEEEISLIHFFGEEYLDYKKRVPTGLPFIKGVKVEL</sequence>
<comment type="function">
    <text evidence="6">Catalyzes the post-translational methylation of isoprenylated C-terminal cysteine residues.</text>
</comment>
<comment type="catalytic activity">
    <reaction evidence="2">
        <text>[protein]-C-terminal S-[(2E,6E)-farnesyl]-L-cysteine + S-adenosyl-L-methionine = [protein]-C-terminal S-[(2E,6E)-farnesyl]-L-cysteine methyl ester + S-adenosyl-L-homocysteine</text>
        <dbReference type="Rhea" id="RHEA:21672"/>
        <dbReference type="Rhea" id="RHEA-COMP:12125"/>
        <dbReference type="Rhea" id="RHEA-COMP:12126"/>
        <dbReference type="ChEBI" id="CHEBI:57856"/>
        <dbReference type="ChEBI" id="CHEBI:59789"/>
        <dbReference type="ChEBI" id="CHEBI:90510"/>
        <dbReference type="ChEBI" id="CHEBI:90511"/>
        <dbReference type="EC" id="2.1.1.100"/>
    </reaction>
</comment>
<comment type="subcellular location">
    <subcellularLocation>
        <location evidence="2">Endoplasmic reticulum membrane</location>
        <topology evidence="2">Multi-pass membrane protein</topology>
    </subcellularLocation>
</comment>
<comment type="tissue specificity">
    <text evidence="5">Highly enriched in adult cerebellum, with a low level expression in other brain regions.</text>
</comment>
<comment type="developmental stage">
    <text evidence="5">During cerebellar development expression was low before postnatal day P6 and dramatically increased after P12.</text>
</comment>
<comment type="similarity">
    <text evidence="4">Belongs to the class VI-like SAM-binding methyltransferase superfamily. Isoprenylcysteine carboxyl methyltransferase family.</text>
</comment>
<evidence type="ECO:0000250" key="1">
    <source>
        <dbReference type="UniProtKB" id="D6WJ77"/>
    </source>
</evidence>
<evidence type="ECO:0000250" key="2">
    <source>
        <dbReference type="UniProtKB" id="O60725"/>
    </source>
</evidence>
<evidence type="ECO:0000255" key="3"/>
<evidence type="ECO:0000255" key="4">
    <source>
        <dbReference type="PROSITE-ProRule" id="PRU00897"/>
    </source>
</evidence>
<evidence type="ECO:0000269" key="5">
    <source>
    </source>
</evidence>
<evidence type="ECO:0000269" key="6">
    <source>
    </source>
</evidence>
<evidence type="ECO:0000305" key="7"/>
<proteinExistence type="evidence at transcript level"/>
<organism>
    <name type="scientific">Mus musculus</name>
    <name type="common">Mouse</name>
    <dbReference type="NCBI Taxonomy" id="10090"/>
    <lineage>
        <taxon>Eukaryota</taxon>
        <taxon>Metazoa</taxon>
        <taxon>Chordata</taxon>
        <taxon>Craniata</taxon>
        <taxon>Vertebrata</taxon>
        <taxon>Euteleostomi</taxon>
        <taxon>Mammalia</taxon>
        <taxon>Eutheria</taxon>
        <taxon>Euarchontoglires</taxon>
        <taxon>Glires</taxon>
        <taxon>Rodentia</taxon>
        <taxon>Myomorpha</taxon>
        <taxon>Muroidea</taxon>
        <taxon>Muridae</taxon>
        <taxon>Murinae</taxon>
        <taxon>Mus</taxon>
        <taxon>Mus</taxon>
    </lineage>
</organism>
<dbReference type="EC" id="2.1.1.100" evidence="2"/>
<dbReference type="EMBL" id="AF209926">
    <property type="protein sequence ID" value="AAG48552.1"/>
    <property type="molecule type" value="mRNA"/>
</dbReference>
<dbReference type="EMBL" id="AA022288">
    <property type="status" value="NOT_ANNOTATED_CDS"/>
    <property type="molecule type" value="mRNA"/>
</dbReference>
<dbReference type="RefSeq" id="NP_598549.1">
    <property type="nucleotide sequence ID" value="NM_133788.2"/>
</dbReference>
<dbReference type="SMR" id="Q9EQK7"/>
<dbReference type="BioGRID" id="208249">
    <property type="interactions" value="3"/>
</dbReference>
<dbReference type="FunCoup" id="Q9EQK7">
    <property type="interactions" value="670"/>
</dbReference>
<dbReference type="STRING" id="10090.ENSMUSP00000043390"/>
<dbReference type="iPTMnet" id="Q9EQK7"/>
<dbReference type="PhosphoSitePlus" id="Q9EQK7"/>
<dbReference type="PaxDb" id="10090-ENSMUSP00000043390"/>
<dbReference type="ProteomicsDB" id="267089"/>
<dbReference type="Pumba" id="Q9EQK7"/>
<dbReference type="DNASU" id="57295"/>
<dbReference type="GeneID" id="57295"/>
<dbReference type="KEGG" id="mmu:57295"/>
<dbReference type="AGR" id="MGI:1888594"/>
<dbReference type="CTD" id="23463"/>
<dbReference type="MGI" id="MGI:1888594">
    <property type="gene designation" value="Icmt"/>
</dbReference>
<dbReference type="eggNOG" id="KOG2628">
    <property type="taxonomic scope" value="Eukaryota"/>
</dbReference>
<dbReference type="InParanoid" id="Q9EQK7"/>
<dbReference type="OrthoDB" id="422086at2759"/>
<dbReference type="PhylomeDB" id="Q9EQK7"/>
<dbReference type="BRENDA" id="2.1.1.100">
    <property type="organism ID" value="3474"/>
</dbReference>
<dbReference type="Reactome" id="R-MMU-163841">
    <property type="pathway name" value="Gamma carboxylation, hypusinylation, hydroxylation, and arylsulfatase activation"/>
</dbReference>
<dbReference type="Reactome" id="R-MMU-9648002">
    <property type="pathway name" value="RAS processing"/>
</dbReference>
<dbReference type="SABIO-RK" id="Q9EQK7"/>
<dbReference type="BioGRID-ORCS" id="57295">
    <property type="hits" value="14 hits in 79 CRISPR screens"/>
</dbReference>
<dbReference type="PRO" id="PR:Q9EQK7"/>
<dbReference type="Proteomes" id="UP000000589">
    <property type="component" value="Unplaced"/>
</dbReference>
<dbReference type="RNAct" id="Q9EQK7">
    <property type="molecule type" value="protein"/>
</dbReference>
<dbReference type="GO" id="GO:0005783">
    <property type="term" value="C:endoplasmic reticulum"/>
    <property type="evidence" value="ECO:0000266"/>
    <property type="project" value="MGI"/>
</dbReference>
<dbReference type="GO" id="GO:0005789">
    <property type="term" value="C:endoplasmic reticulum membrane"/>
    <property type="evidence" value="ECO:0000266"/>
    <property type="project" value="MGI"/>
</dbReference>
<dbReference type="GO" id="GO:0008140">
    <property type="term" value="F:cAMP response element binding protein binding"/>
    <property type="evidence" value="ECO:0000315"/>
    <property type="project" value="MGI"/>
</dbReference>
<dbReference type="GO" id="GO:0004671">
    <property type="term" value="F:protein C-terminal S-isoprenylcysteine carboxyl O-methyltransferase activity"/>
    <property type="evidence" value="ECO:0000315"/>
    <property type="project" value="MGI"/>
</dbReference>
<dbReference type="GO" id="GO:0030282">
    <property type="term" value="P:bone mineralization"/>
    <property type="evidence" value="ECO:0000316"/>
    <property type="project" value="MGI"/>
</dbReference>
<dbReference type="GO" id="GO:0080120">
    <property type="term" value="P:CAAX-box protein maturation"/>
    <property type="evidence" value="ECO:0000315"/>
    <property type="project" value="MGI"/>
</dbReference>
<dbReference type="GO" id="GO:0008340">
    <property type="term" value="P:determination of adult lifespan"/>
    <property type="evidence" value="ECO:0000316"/>
    <property type="project" value="MGI"/>
</dbReference>
<dbReference type="GO" id="GO:0048144">
    <property type="term" value="P:fibroblast proliferation"/>
    <property type="evidence" value="ECO:0000315"/>
    <property type="project" value="MGI"/>
</dbReference>
<dbReference type="GO" id="GO:0001701">
    <property type="term" value="P:in utero embryonic development"/>
    <property type="evidence" value="ECO:0000315"/>
    <property type="project" value="MGI"/>
</dbReference>
<dbReference type="GO" id="GO:0001889">
    <property type="term" value="P:liver development"/>
    <property type="evidence" value="ECO:0000315"/>
    <property type="project" value="MGI"/>
</dbReference>
<dbReference type="GO" id="GO:0032259">
    <property type="term" value="P:methylation"/>
    <property type="evidence" value="ECO:0007669"/>
    <property type="project" value="UniProtKB-KW"/>
</dbReference>
<dbReference type="GO" id="GO:0035264">
    <property type="term" value="P:multicellular organism growth"/>
    <property type="evidence" value="ECO:0000315"/>
    <property type="project" value="MGI"/>
</dbReference>
<dbReference type="GO" id="GO:0050905">
    <property type="term" value="P:neuromuscular process"/>
    <property type="evidence" value="ECO:0000316"/>
    <property type="project" value="MGI"/>
</dbReference>
<dbReference type="GO" id="GO:0048146">
    <property type="term" value="P:positive regulation of fibroblast proliferation"/>
    <property type="evidence" value="ECO:0000315"/>
    <property type="project" value="MGI"/>
</dbReference>
<dbReference type="GO" id="GO:0008104">
    <property type="term" value="P:protein localization"/>
    <property type="evidence" value="ECO:0000315"/>
    <property type="project" value="MGI"/>
</dbReference>
<dbReference type="GO" id="GO:2000772">
    <property type="term" value="P:regulation of cellular senescence"/>
    <property type="evidence" value="ECO:0000316"/>
    <property type="project" value="MGI"/>
</dbReference>
<dbReference type="GO" id="GO:0032880">
    <property type="term" value="P:regulation of protein localization"/>
    <property type="evidence" value="ECO:0000315"/>
    <property type="project" value="MGI"/>
</dbReference>
<dbReference type="GO" id="GO:0046578">
    <property type="term" value="P:regulation of Ras protein signal transduction"/>
    <property type="evidence" value="ECO:0000316"/>
    <property type="project" value="MGI"/>
</dbReference>
<dbReference type="GO" id="GO:0031929">
    <property type="term" value="P:TOR signaling"/>
    <property type="evidence" value="ECO:0000315"/>
    <property type="project" value="MGI"/>
</dbReference>
<dbReference type="FunFam" id="1.20.120.1630:FF:000007">
    <property type="entry name" value="Protein-S-isoprenylcysteine O-methyltransferase"/>
    <property type="match status" value="1"/>
</dbReference>
<dbReference type="Gene3D" id="1.20.120.1630">
    <property type="match status" value="1"/>
</dbReference>
<dbReference type="InterPro" id="IPR007269">
    <property type="entry name" value="ICMT_MeTrfase"/>
</dbReference>
<dbReference type="InterPro" id="IPR025770">
    <property type="entry name" value="PPMT_MeTrfase"/>
</dbReference>
<dbReference type="PANTHER" id="PTHR12714">
    <property type="entry name" value="PROTEIN-S ISOPRENYLCYSTEINE O-METHYLTRANSFERASE"/>
    <property type="match status" value="1"/>
</dbReference>
<dbReference type="PANTHER" id="PTHR12714:SF9">
    <property type="entry name" value="PROTEIN-S-ISOPRENYLCYSTEINE O-METHYLTRANSFERASE"/>
    <property type="match status" value="1"/>
</dbReference>
<dbReference type="Pfam" id="PF04140">
    <property type="entry name" value="ICMT"/>
    <property type="match status" value="1"/>
</dbReference>
<dbReference type="PROSITE" id="PS51564">
    <property type="entry name" value="SAM_ICMT"/>
    <property type="match status" value="1"/>
</dbReference>